<name>ISPI2_GALME</name>
<evidence type="ECO:0000250" key="1"/>
<evidence type="ECO:0000255" key="2">
    <source>
        <dbReference type="PROSITE-ProRule" id="PRU00031"/>
    </source>
</evidence>
<keyword id="KW-0903">Direct protein sequencing</keyword>
<keyword id="KW-1015">Disulfide bond</keyword>
<keyword id="KW-0646">Protease inhibitor</keyword>
<keyword id="KW-1185">Reference proteome</keyword>
<keyword id="KW-0722">Serine protease inhibitor</keyword>
<feature type="chain" id="PRO_0000155428" description="Inducible serine protease inhibitor 2">
    <location>
        <begin position="1"/>
        <end position="52" status="greater than"/>
    </location>
</feature>
<feature type="domain" description="BPTI/Kunitz inhibitor" evidence="2">
    <location>
        <begin position="5"/>
        <end position="52" status="greater than"/>
    </location>
</feature>
<feature type="site" description="Reactive bond" evidence="1">
    <location>
        <begin position="15"/>
        <end position="16"/>
    </location>
</feature>
<feature type="disulfide bond" evidence="2">
    <location>
        <begin position="14"/>
        <end position="38"/>
    </location>
</feature>
<feature type="disulfide bond" evidence="2">
    <location>
        <begin position="30"/>
        <end position="51"/>
    </location>
</feature>
<feature type="non-terminal residue">
    <location>
        <position position="52"/>
    </location>
</feature>
<sequence>LDPKCTLPLETGICRAELHRFGYDTKLKECTQFVYGGCHHNENNFKKLEVCR</sequence>
<proteinExistence type="evidence at protein level"/>
<reference key="1">
    <citation type="journal article" date="2000" name="Eur. J. Biochem.">
        <title>Isolation and characterization of novel inducible serine protease inhibitors from larval hemolymph of the greater wax moth Galleria mellonella.</title>
        <authorList>
            <person name="Froebius A.C."/>
            <person name="Kanost M.R."/>
            <person name="Goetz P."/>
            <person name="Vilcinskas A."/>
        </authorList>
    </citation>
    <scope>PROTEIN SEQUENCE</scope>
    <source>
        <tissue>Hemolymph</tissue>
    </source>
</reference>
<comment type="function">
    <text>Inhibits trypsin and the toxin protease PR2 of M.anisopliae. Does not inhibit chymotrypsin, subtilisin Carlsberg, proteinase K, porcine pancreatic elastase and the toxin protease PR1 of M.anisopliae.</text>
</comment>
<comment type="developmental stage">
    <text>Last instar larvae.</text>
</comment>
<comment type="induction">
    <text>By infection.</text>
</comment>
<protein>
    <recommendedName>
        <fullName>Inducible serine protease inhibitor 2</fullName>
        <shortName>ISPI-2</shortName>
    </recommendedName>
</protein>
<organism>
    <name type="scientific">Galleria mellonella</name>
    <name type="common">Greater wax moth</name>
    <dbReference type="NCBI Taxonomy" id="7137"/>
    <lineage>
        <taxon>Eukaryota</taxon>
        <taxon>Metazoa</taxon>
        <taxon>Ecdysozoa</taxon>
        <taxon>Arthropoda</taxon>
        <taxon>Hexapoda</taxon>
        <taxon>Insecta</taxon>
        <taxon>Pterygota</taxon>
        <taxon>Neoptera</taxon>
        <taxon>Endopterygota</taxon>
        <taxon>Lepidoptera</taxon>
        <taxon>Glossata</taxon>
        <taxon>Ditrysia</taxon>
        <taxon>Pyraloidea</taxon>
        <taxon>Pyralidae</taxon>
        <taxon>Galleriinae</taxon>
        <taxon>Galleria</taxon>
    </lineage>
</organism>
<dbReference type="SMR" id="P81906"/>
<dbReference type="FunCoup" id="P81906">
    <property type="interactions" value="4"/>
</dbReference>
<dbReference type="MEROPS" id="I02.958"/>
<dbReference type="InParanoid" id="P81906"/>
<dbReference type="Proteomes" id="UP000504614">
    <property type="component" value="Unplaced"/>
</dbReference>
<dbReference type="GO" id="GO:0005615">
    <property type="term" value="C:extracellular space"/>
    <property type="evidence" value="ECO:0007669"/>
    <property type="project" value="TreeGrafter"/>
</dbReference>
<dbReference type="GO" id="GO:0004867">
    <property type="term" value="F:serine-type endopeptidase inhibitor activity"/>
    <property type="evidence" value="ECO:0007669"/>
    <property type="project" value="UniProtKB-KW"/>
</dbReference>
<dbReference type="Gene3D" id="4.10.410.10">
    <property type="entry name" value="Pancreatic trypsin inhibitor Kunitz domain"/>
    <property type="match status" value="1"/>
</dbReference>
<dbReference type="InterPro" id="IPR002223">
    <property type="entry name" value="Kunitz_BPTI"/>
</dbReference>
<dbReference type="InterPro" id="IPR036880">
    <property type="entry name" value="Kunitz_BPTI_sf"/>
</dbReference>
<dbReference type="InterPro" id="IPR020901">
    <property type="entry name" value="Prtase_inh_Kunz-CS"/>
</dbReference>
<dbReference type="InterPro" id="IPR050098">
    <property type="entry name" value="TFPI/VKTCI-like"/>
</dbReference>
<dbReference type="PANTHER" id="PTHR10083:SF374">
    <property type="entry name" value="BPTI_KUNITZ INHIBITOR DOMAIN-CONTAINING PROTEIN"/>
    <property type="match status" value="1"/>
</dbReference>
<dbReference type="PANTHER" id="PTHR10083">
    <property type="entry name" value="KUNITZ-TYPE PROTEASE INHIBITOR-RELATED"/>
    <property type="match status" value="1"/>
</dbReference>
<dbReference type="Pfam" id="PF00014">
    <property type="entry name" value="Kunitz_BPTI"/>
    <property type="match status" value="1"/>
</dbReference>
<dbReference type="PRINTS" id="PR00759">
    <property type="entry name" value="BASICPTASE"/>
</dbReference>
<dbReference type="SMART" id="SM00131">
    <property type="entry name" value="KU"/>
    <property type="match status" value="1"/>
</dbReference>
<dbReference type="SUPFAM" id="SSF57362">
    <property type="entry name" value="BPTI-like"/>
    <property type="match status" value="1"/>
</dbReference>
<dbReference type="PROSITE" id="PS00280">
    <property type="entry name" value="BPTI_KUNITZ_1"/>
    <property type="match status" value="1"/>
</dbReference>
<dbReference type="PROSITE" id="PS50279">
    <property type="entry name" value="BPTI_KUNITZ_2"/>
    <property type="match status" value="1"/>
</dbReference>
<accession>P81906</accession>